<proteinExistence type="inferred from homology"/>
<dbReference type="EMBL" id="L11256">
    <property type="protein sequence ID" value="AAC36813.1"/>
    <property type="molecule type" value="Unassigned_DNA"/>
</dbReference>
<dbReference type="SMR" id="P33320"/>
<dbReference type="STRING" id="273526.SMDB11_1417"/>
<dbReference type="GO" id="GO:0005829">
    <property type="term" value="C:cytosol"/>
    <property type="evidence" value="ECO:0007669"/>
    <property type="project" value="TreeGrafter"/>
</dbReference>
<dbReference type="GO" id="GO:0016020">
    <property type="term" value="C:membrane"/>
    <property type="evidence" value="ECO:0007669"/>
    <property type="project" value="TreeGrafter"/>
</dbReference>
<dbReference type="GO" id="GO:0043022">
    <property type="term" value="F:ribosome binding"/>
    <property type="evidence" value="ECO:0007669"/>
    <property type="project" value="TreeGrafter"/>
</dbReference>
<dbReference type="GO" id="GO:0003743">
    <property type="term" value="F:translation initiation factor activity"/>
    <property type="evidence" value="ECO:0007669"/>
    <property type="project" value="UniProtKB-UniRule"/>
</dbReference>
<dbReference type="GO" id="GO:0032790">
    <property type="term" value="P:ribosome disassembly"/>
    <property type="evidence" value="ECO:0007669"/>
    <property type="project" value="TreeGrafter"/>
</dbReference>
<dbReference type="FunFam" id="3.10.20.80:FF:000001">
    <property type="entry name" value="Translation initiation factor IF-3"/>
    <property type="match status" value="1"/>
</dbReference>
<dbReference type="FunFam" id="3.30.110.10:FF:000001">
    <property type="entry name" value="Translation initiation factor IF-3"/>
    <property type="match status" value="1"/>
</dbReference>
<dbReference type="Gene3D" id="3.30.110.10">
    <property type="entry name" value="Translation initiation factor 3 (IF-3), C-terminal domain"/>
    <property type="match status" value="1"/>
</dbReference>
<dbReference type="Gene3D" id="3.10.20.80">
    <property type="entry name" value="Translation initiation factor 3 (IF-3), N-terminal domain"/>
    <property type="match status" value="1"/>
</dbReference>
<dbReference type="HAMAP" id="MF_00080">
    <property type="entry name" value="IF_3"/>
    <property type="match status" value="1"/>
</dbReference>
<dbReference type="InterPro" id="IPR036788">
    <property type="entry name" value="T_IF-3_C_sf"/>
</dbReference>
<dbReference type="InterPro" id="IPR036787">
    <property type="entry name" value="T_IF-3_N_sf"/>
</dbReference>
<dbReference type="InterPro" id="IPR019813">
    <property type="entry name" value="Translation_initiation_fac3_CS"/>
</dbReference>
<dbReference type="InterPro" id="IPR001288">
    <property type="entry name" value="Translation_initiation_fac_3"/>
</dbReference>
<dbReference type="InterPro" id="IPR019815">
    <property type="entry name" value="Translation_initiation_fac_3_C"/>
</dbReference>
<dbReference type="InterPro" id="IPR019814">
    <property type="entry name" value="Translation_initiation_fac_3_N"/>
</dbReference>
<dbReference type="NCBIfam" id="TIGR00168">
    <property type="entry name" value="infC"/>
    <property type="match status" value="1"/>
</dbReference>
<dbReference type="PANTHER" id="PTHR10938">
    <property type="entry name" value="TRANSLATION INITIATION FACTOR IF-3"/>
    <property type="match status" value="1"/>
</dbReference>
<dbReference type="PANTHER" id="PTHR10938:SF0">
    <property type="entry name" value="TRANSLATION INITIATION FACTOR IF-3, MITOCHONDRIAL"/>
    <property type="match status" value="1"/>
</dbReference>
<dbReference type="Pfam" id="PF00707">
    <property type="entry name" value="IF3_C"/>
    <property type="match status" value="1"/>
</dbReference>
<dbReference type="Pfam" id="PF05198">
    <property type="entry name" value="IF3_N"/>
    <property type="match status" value="1"/>
</dbReference>
<dbReference type="SUPFAM" id="SSF55200">
    <property type="entry name" value="Translation initiation factor IF3, C-terminal domain"/>
    <property type="match status" value="1"/>
</dbReference>
<dbReference type="SUPFAM" id="SSF54364">
    <property type="entry name" value="Translation initiation factor IF3, N-terminal domain"/>
    <property type="match status" value="1"/>
</dbReference>
<dbReference type="PROSITE" id="PS00938">
    <property type="entry name" value="IF3"/>
    <property type="match status" value="1"/>
</dbReference>
<protein>
    <recommendedName>
        <fullName evidence="2">Translation initiation factor IF-3</fullName>
    </recommendedName>
</protein>
<accession>P33320</accession>
<name>IF3_SERMA</name>
<keyword id="KW-0963">Cytoplasm</keyword>
<keyword id="KW-0396">Initiation factor</keyword>
<keyword id="KW-0648">Protein biosynthesis</keyword>
<feature type="chain" id="PRO_0000177572" description="Translation initiation factor IF-3">
    <location>
        <begin position="1"/>
        <end position="183"/>
    </location>
</feature>
<feature type="site" description="Important for 30S binding" evidence="1">
    <location>
        <position position="107"/>
    </location>
</feature>
<feature type="site" description="Important for 30S binding" evidence="1">
    <location>
        <position position="110"/>
    </location>
</feature>
<reference key="1">
    <citation type="journal article" date="1993" name="FEMS Microbiol. Lett.">
        <title>Molecular cloning and sequencing of infC, the gene encoding translation initiation factor IF3, from four enterobacterial species.</title>
        <authorList>
            <person name="Liveris D."/>
            <person name="Schwartz J.J."/>
            <person name="Geertman R."/>
            <person name="Schwartz I."/>
        </authorList>
    </citation>
    <scope>NUCLEOTIDE SEQUENCE [GENOMIC DNA]</scope>
    <source>
        <strain>ATCC 29937 / 868-57</strain>
    </source>
</reference>
<organism>
    <name type="scientific">Serratia marcescens</name>
    <dbReference type="NCBI Taxonomy" id="615"/>
    <lineage>
        <taxon>Bacteria</taxon>
        <taxon>Pseudomonadati</taxon>
        <taxon>Pseudomonadota</taxon>
        <taxon>Gammaproteobacteria</taxon>
        <taxon>Enterobacterales</taxon>
        <taxon>Yersiniaceae</taxon>
        <taxon>Serratia</taxon>
    </lineage>
</organism>
<sequence length="183" mass="20877">MKGGKRVQPARPNRINREIRAQEVRLTGVDGEQIGIVSLNEALEKAEEAGVDLVEISPNAEPPVCRIMDYGKFLYEKSKSTKEQKEEQKVIQVKEIKFRPGTDDGDYQVKLRNLIRFLEDGDKAKITLRFRGPEMAHQQIGMEVLNPLRKDLCEDMDLAVVESFPTKIEGRQMIMVLAPKKKQ</sequence>
<comment type="function">
    <text evidence="2">IF-3 binds to the 30S ribosomal subunit and shifts the equilibrium between 70S ribosomes and their 50S and 30S subunits in favor of the free subunits, thus enhancing the availability of 30S subunits on which protein synthesis initiation begins.</text>
</comment>
<comment type="subunit">
    <text evidence="2">Monomer.</text>
</comment>
<comment type="subcellular location">
    <subcellularLocation>
        <location evidence="2">Cytoplasm</location>
    </subcellularLocation>
</comment>
<comment type="similarity">
    <text evidence="2">Belongs to the IF-3 family.</text>
</comment>
<evidence type="ECO:0000250" key="1"/>
<evidence type="ECO:0000255" key="2">
    <source>
        <dbReference type="HAMAP-Rule" id="MF_00080"/>
    </source>
</evidence>
<gene>
    <name evidence="2" type="primary">infC</name>
</gene>